<accession>P63053</accession>
<accession>P02248</accession>
<accession>P02249</accession>
<accession>P02250</accession>
<accession>P62974</accession>
<accession>Q29120</accession>
<accession>Q29203</accession>
<accession>Q29252</accession>
<accession>Q91887</accession>
<accession>Q91888</accession>
<accession>Q95260</accession>
<proteinExistence type="evidence at protein level"/>
<name>RL40_PIG</name>
<gene>
    <name type="primary">UBA52</name>
    <name type="synonym">UBCEP2</name>
</gene>
<protein>
    <recommendedName>
        <fullName evidence="6">Ubiquitin-ribosomal protein eL40 fusion protein</fullName>
    </recommendedName>
    <alternativeName>
        <fullName>CEP52</fullName>
    </alternativeName>
    <alternativeName>
        <fullName>Ubiquitin A-52 residue ribosomal protein fusion product 1</fullName>
    </alternativeName>
    <component>
        <recommendedName>
            <fullName>Ubiquitin</fullName>
        </recommendedName>
    </component>
    <component>
        <recommendedName>
            <fullName evidence="6">Large ribosomal subunit protein eL40</fullName>
        </recommendedName>
        <alternativeName>
            <fullName>60S ribosomal protein L40</fullName>
        </alternativeName>
    </component>
</protein>
<comment type="function">
    <molecule>Ubiquitin</molecule>
    <text evidence="4">Exists either covalently attached to another protein, or free (unanchored). When covalently bound, it is conjugated to target proteins via an isopeptide bond either as a monomer (monoubiquitin), a polymer linked via different Lys residues of the ubiquitin (polyubiquitin chains) or a linear polymer linked via the initiator Met of the ubiquitin (linear polyubiquitin chains). Polyubiquitin chains, when attached to a target protein, have different functions depending on the Lys residue of the ubiquitin that is linked: Lys-6-linked may be involved in DNA repair; Lys-11-linked is involved in ERAD (endoplasmic reticulum-associated degradation) and in cell-cycle regulation; Lys-29-linked is involved in proteotoxic stress response and cell cycle; Lys-33-linked is involved in kinase modification; Lys-48-linked is involved in protein degradation via the proteasome; Lys-63-linked is involved in endocytosis, DNA-damage responses as well as in signaling processes leading to activation of the transcription factor NF-kappa-B. Linear polymer chains formed via attachment by the initiator Met lead to cell signaling. Ubiquitin is usually conjugated to Lys residues of target proteins, however, in rare cases, conjugation to Cys or Ser residues has been observed. When polyubiquitin is free (unanchored-polyubiquitin), it also has distinct roles, such as in activation of protein kinases, and in signaling.</text>
</comment>
<comment type="function">
    <molecule>Large ribosomal subunit protein eL40</molecule>
    <text evidence="4">Component of the 60S subunit of the ribosome. Ribosomal protein L40 is essential for translation of a subset of cellular transcripts, and especially for cap-dependent translation of vesicular stomatitis virus mRNAs.</text>
</comment>
<comment type="subunit">
    <molecule>Large ribosomal subunit protein eL40</molecule>
    <text evidence="4">Part of the 60S ribosomal subunit. Interacts with UBQLN1 (via UBA domain).</text>
</comment>
<comment type="subcellular location">
    <molecule>Ubiquitin</molecule>
    <subcellularLocation>
        <location evidence="1">Cytoplasm</location>
    </subcellularLocation>
    <subcellularLocation>
        <location evidence="1">Nucleus</location>
    </subcellularLocation>
</comment>
<comment type="subcellular location">
    <molecule>Large ribosomal subunit protein eL40</molecule>
    <subcellularLocation>
        <location evidence="2">Cytoplasm</location>
    </subcellularLocation>
</comment>
<comment type="PTM">
    <molecule>Ubiquitin</molecule>
    <text evidence="4">Phosphorylated at Ser-65 by PINK1 during mitophagy. Phosphorylated ubiquitin specifically binds and activates parkin (PRKN), triggering mitophagy. Phosphorylation does not affect E1-mediated E2 charging of ubiquitin but affects discharging of E2 enzymes to form polyubiquitin chains. It also affects deubiquitination by deubiquitinase enzymes such as USP30.</text>
</comment>
<comment type="PTM">
    <molecule>Ubiquitin</molecule>
    <text evidence="4">Mono-ADP-ribosylated at the C-terminus by PARP9, a component of the PPAR9-DTX3L complex. ADP-ribosylation requires processing by E1 and E2 enzymes and prevents ubiquitin conjugation to substrates such as histones.</text>
</comment>
<comment type="PTM">
    <molecule>Large ribosomal subunit protein eL40</molecule>
    <text evidence="4">Trimethylation of Lys-98 ('Lys-22' of the mature chain) by SMYD5 promotes translation elongation and protein synthesis.</text>
</comment>
<comment type="miscellaneous">
    <text>Ubiquitin is encoded by 4 different genes. UBA52 and RPS27A genes code for a single copy of ubiquitin fused to the ribosomal proteins eL40 and eS31, respectively. UBB and UBC genes code for a polyubiquitin precursor with exact head to tail repeats, the number of repeats differ between species and strains.</text>
</comment>
<comment type="miscellaneous">
    <text>For a better understanding, features related to ubiquitin are only indicated for the first chain.</text>
</comment>
<comment type="similarity">
    <text evidence="6">In the N-terminal section; belongs to the ubiquitin family.</text>
</comment>
<comment type="similarity">
    <text evidence="6">In the C-terminal section; belongs to the eukaryotic ribosomal protein eL40 family.</text>
</comment>
<keyword id="KW-0002">3D-structure</keyword>
<keyword id="KW-0013">ADP-ribosylation</keyword>
<keyword id="KW-0963">Cytoplasm</keyword>
<keyword id="KW-1017">Isopeptide bond</keyword>
<keyword id="KW-0488">Methylation</keyword>
<keyword id="KW-0539">Nucleus</keyword>
<keyword id="KW-0597">Phosphoprotein</keyword>
<keyword id="KW-1185">Reference proteome</keyword>
<keyword id="KW-0687">Ribonucleoprotein</keyword>
<keyword id="KW-0689">Ribosomal protein</keyword>
<keyword id="KW-0832">Ubl conjugation</keyword>
<evidence type="ECO:0000250" key="1"/>
<evidence type="ECO:0000250" key="2">
    <source>
        <dbReference type="UniProtKB" id="P62984"/>
    </source>
</evidence>
<evidence type="ECO:0000250" key="3">
    <source>
        <dbReference type="UniProtKB" id="P62986"/>
    </source>
</evidence>
<evidence type="ECO:0000250" key="4">
    <source>
        <dbReference type="UniProtKB" id="P62987"/>
    </source>
</evidence>
<evidence type="ECO:0000255" key="5">
    <source>
        <dbReference type="PROSITE-ProRule" id="PRU00214"/>
    </source>
</evidence>
<evidence type="ECO:0000305" key="6"/>
<feature type="chain" id="PRO_0000396436" description="Ubiquitin">
    <location>
        <begin position="1"/>
        <end position="76"/>
    </location>
</feature>
<feature type="chain" id="PRO_0000396437" description="Large ribosomal subunit protein eL40">
    <location>
        <begin position="77"/>
        <end position="128"/>
    </location>
</feature>
<feature type="domain" description="Ubiquitin-like" evidence="5">
    <location>
        <begin position="1"/>
        <end position="76"/>
    </location>
</feature>
<feature type="site" description="Interacts with activating enzyme">
    <location>
        <position position="54"/>
    </location>
</feature>
<feature type="site" description="Essential for function">
    <location>
        <position position="68"/>
    </location>
</feature>
<feature type="site" description="Interacts with activating enzyme">
    <location>
        <position position="72"/>
    </location>
</feature>
<feature type="modified residue" description="Phosphoserine; by PINK1" evidence="4">
    <location>
        <position position="65"/>
    </location>
</feature>
<feature type="modified residue" description="ADP-ribosylglycine" evidence="4">
    <location>
        <position position="76"/>
    </location>
</feature>
<feature type="modified residue" description="N6,N6,N6-trimethyllysine" evidence="3">
    <location>
        <position position="98"/>
    </location>
</feature>
<feature type="cross-link" description="Glycyl lysine isopeptide (Lys-Gly) (interchain with G-Cter in ubiquitin)" evidence="4">
    <location>
        <position position="6"/>
    </location>
</feature>
<feature type="cross-link" description="Glycyl lysine isopeptide (Lys-Gly) (interchain with G-Cter in ubiquitin)" evidence="4">
    <location>
        <position position="11"/>
    </location>
</feature>
<feature type="cross-link" description="Glycyl lysine isopeptide (Lys-Gly) (interchain with G-Cter in ubiquitin)" evidence="4 6">
    <location>
        <position position="27"/>
    </location>
</feature>
<feature type="cross-link" description="Glycyl lysine isopeptide (Lys-Gly) (interchain with G-Cter in ubiquitin)" evidence="4">
    <location>
        <position position="29"/>
    </location>
</feature>
<feature type="cross-link" description="Glycyl lysine isopeptide (Lys-Gly) (interchain with G-Cter in ubiquitin)" evidence="4">
    <location>
        <position position="33"/>
    </location>
</feature>
<feature type="cross-link" description="Glycyl lysine isopeptide (Lys-Gly) (interchain with G-Cter in ubiquitin)" evidence="4">
    <location>
        <position position="48"/>
    </location>
</feature>
<feature type="cross-link" description="Glycyl lysine isopeptide (Lys-Gly) (interchain with G-Cter in ubiquitin)" evidence="4">
    <location>
        <position position="63"/>
    </location>
</feature>
<feature type="cross-link" description="Glycyl lysine isopeptide (Gly-Lys) (interchain with K-? in acceptor proteins)">
    <location>
        <position position="76"/>
    </location>
</feature>
<sequence>MQIFVKTLTGKTITLEVEPSDTIENVKAKIQDKEGIPPDQQRLIFAGKQLEDGRTLSDYNIQKESTLHLVLRLRGGIIEPSLRQLAQKYNCDKMICRKCYARLHPRAVNCRKKKCGHTNNLRPKKKVK</sequence>
<organism>
    <name type="scientific">Sus scrofa</name>
    <name type="common">Pig</name>
    <dbReference type="NCBI Taxonomy" id="9823"/>
    <lineage>
        <taxon>Eukaryota</taxon>
        <taxon>Metazoa</taxon>
        <taxon>Chordata</taxon>
        <taxon>Craniata</taxon>
        <taxon>Vertebrata</taxon>
        <taxon>Euteleostomi</taxon>
        <taxon>Mammalia</taxon>
        <taxon>Eutheria</taxon>
        <taxon>Laurasiatheria</taxon>
        <taxon>Artiodactyla</taxon>
        <taxon>Suina</taxon>
        <taxon>Suidae</taxon>
        <taxon>Sus</taxon>
    </lineage>
</organism>
<reference key="1">
    <citation type="journal article" date="1997" name="FEBS Lett.">
        <title>Ubiquitin is physiologically induced by interferons in luminal epithelium of porcine uterine endometrium in early pregnancy: global RT-PCR cDNA in place of RNA for differential display screening.</title>
        <authorList>
            <person name="Chwetzoff S."/>
            <person name="d'Andrea S."/>
        </authorList>
    </citation>
    <scope>NUCLEOTIDE SEQUENCE [MRNA]</scope>
    <source>
        <tissue>Uterine horn luminal epithelium</tissue>
    </source>
</reference>
<dbReference type="EMBL" id="U72496">
    <property type="protein sequence ID" value="AAB52914.1"/>
    <property type="molecule type" value="mRNA"/>
</dbReference>
<dbReference type="PIR" id="A29584">
    <property type="entry name" value="A29584"/>
</dbReference>
<dbReference type="RefSeq" id="NP_999376.1">
    <property type="nucleotide sequence ID" value="NM_214211.1"/>
</dbReference>
<dbReference type="RefSeq" id="XP_005652973.1">
    <property type="nucleotide sequence ID" value="XM_005652916.3"/>
</dbReference>
<dbReference type="RefSeq" id="XP_013846724.1">
    <property type="nucleotide sequence ID" value="XM_013991270.1"/>
</dbReference>
<dbReference type="RefSeq" id="XP_013846730.1">
    <property type="nucleotide sequence ID" value="XM_013991276.2"/>
</dbReference>
<dbReference type="PDB" id="3J7O">
    <property type="method" value="EM"/>
    <property type="resolution" value="3.50 A"/>
    <property type="chains" value="m=1-128"/>
</dbReference>
<dbReference type="PDB" id="3J7P">
    <property type="method" value="EM"/>
    <property type="resolution" value="3.50 A"/>
    <property type="chains" value="m=1-128"/>
</dbReference>
<dbReference type="PDB" id="3J7Q">
    <property type="method" value="EM"/>
    <property type="resolution" value="3.40 A"/>
    <property type="chains" value="m=1-128"/>
</dbReference>
<dbReference type="PDB" id="3J7R">
    <property type="method" value="EM"/>
    <property type="resolution" value="3.90 A"/>
    <property type="chains" value="m=1-128"/>
</dbReference>
<dbReference type="PDBsum" id="3J7O"/>
<dbReference type="PDBsum" id="3J7P"/>
<dbReference type="PDBsum" id="3J7Q"/>
<dbReference type="PDBsum" id="3J7R"/>
<dbReference type="SMR" id="P63053"/>
<dbReference type="FunCoup" id="P63053">
    <property type="interactions" value="2267"/>
</dbReference>
<dbReference type="STRING" id="9823.ENSSSCP00000014786"/>
<dbReference type="PaxDb" id="9823-ENSSSCP00000014787"/>
<dbReference type="PeptideAtlas" id="P63053"/>
<dbReference type="Ensembl" id="ENSSSCT00065030518.1">
    <property type="protein sequence ID" value="ENSSSCP00065012477.1"/>
    <property type="gene ID" value="ENSSSCG00065022906.1"/>
</dbReference>
<dbReference type="Ensembl" id="ENSSSCT00070029173.1">
    <property type="protein sequence ID" value="ENSSSCP00070024317.1"/>
    <property type="gene ID" value="ENSSSCG00070014835.1"/>
</dbReference>
<dbReference type="Ensembl" id="ENSSSCT00110038948">
    <property type="protein sequence ID" value="ENSSSCP00110026902"/>
    <property type="gene ID" value="ENSSSCG00110020260"/>
</dbReference>
<dbReference type="GeneID" id="397418"/>
<dbReference type="KEGG" id="ssc:397418"/>
<dbReference type="CTD" id="7311"/>
<dbReference type="eggNOG" id="KOG0003">
    <property type="taxonomic scope" value="Eukaryota"/>
</dbReference>
<dbReference type="HOGENOM" id="CLU_010412_3_4_1"/>
<dbReference type="InParanoid" id="P63053"/>
<dbReference type="OrthoDB" id="428577at2759"/>
<dbReference type="TreeFam" id="TF352129"/>
<dbReference type="ChiTaRS" id="UBA52">
    <property type="organism name" value="pig"/>
</dbReference>
<dbReference type="Proteomes" id="UP000008227">
    <property type="component" value="Unplaced"/>
</dbReference>
<dbReference type="Proteomes" id="UP000314985">
    <property type="component" value="Chromosome 2"/>
</dbReference>
<dbReference type="Proteomes" id="UP000694570">
    <property type="component" value="Unplaced"/>
</dbReference>
<dbReference type="Proteomes" id="UP000694571">
    <property type="component" value="Unplaced"/>
</dbReference>
<dbReference type="Proteomes" id="UP000694720">
    <property type="component" value="Unplaced"/>
</dbReference>
<dbReference type="Proteomes" id="UP000694722">
    <property type="component" value="Unplaced"/>
</dbReference>
<dbReference type="Proteomes" id="UP000694723">
    <property type="component" value="Unplaced"/>
</dbReference>
<dbReference type="Proteomes" id="UP000694724">
    <property type="component" value="Unplaced"/>
</dbReference>
<dbReference type="Proteomes" id="UP000694725">
    <property type="component" value="Unplaced"/>
</dbReference>
<dbReference type="Proteomes" id="UP000694726">
    <property type="component" value="Unplaced"/>
</dbReference>
<dbReference type="Proteomes" id="UP000694727">
    <property type="component" value="Unplaced"/>
</dbReference>
<dbReference type="Proteomes" id="UP000694728">
    <property type="component" value="Unplaced"/>
</dbReference>
<dbReference type="GO" id="GO:0005737">
    <property type="term" value="C:cytoplasm"/>
    <property type="evidence" value="ECO:0000318"/>
    <property type="project" value="GO_Central"/>
</dbReference>
<dbReference type="GO" id="GO:0098556">
    <property type="term" value="C:cytoplasmic side of rough endoplasmic reticulum membrane"/>
    <property type="evidence" value="ECO:0000314"/>
    <property type="project" value="UniProtKB"/>
</dbReference>
<dbReference type="GO" id="GO:0015934">
    <property type="term" value="C:large ribosomal subunit"/>
    <property type="evidence" value="ECO:0000314"/>
    <property type="project" value="UniProtKB"/>
</dbReference>
<dbReference type="GO" id="GO:0005634">
    <property type="term" value="C:nucleus"/>
    <property type="evidence" value="ECO:0000318"/>
    <property type="project" value="GO_Central"/>
</dbReference>
<dbReference type="GO" id="GO:0031386">
    <property type="term" value="F:protein tag activity"/>
    <property type="evidence" value="ECO:0000318"/>
    <property type="project" value="GO_Central"/>
</dbReference>
<dbReference type="GO" id="GO:0003735">
    <property type="term" value="F:structural constituent of ribosome"/>
    <property type="evidence" value="ECO:0000318"/>
    <property type="project" value="GO_Central"/>
</dbReference>
<dbReference type="GO" id="GO:0031625">
    <property type="term" value="F:ubiquitin protein ligase binding"/>
    <property type="evidence" value="ECO:0000318"/>
    <property type="project" value="GO_Central"/>
</dbReference>
<dbReference type="GO" id="GO:0019941">
    <property type="term" value="P:modification-dependent protein catabolic process"/>
    <property type="evidence" value="ECO:0000318"/>
    <property type="project" value="GO_Central"/>
</dbReference>
<dbReference type="GO" id="GO:0016567">
    <property type="term" value="P:protein ubiquitination"/>
    <property type="evidence" value="ECO:0000318"/>
    <property type="project" value="GO_Central"/>
</dbReference>
<dbReference type="GO" id="GO:0006412">
    <property type="term" value="P:translation"/>
    <property type="evidence" value="ECO:0007669"/>
    <property type="project" value="InterPro"/>
</dbReference>
<dbReference type="CDD" id="cd01803">
    <property type="entry name" value="Ubl_ubiquitin"/>
    <property type="match status" value="1"/>
</dbReference>
<dbReference type="FunFam" id="3.10.20.90:FF:000014">
    <property type="entry name" value="Ubiquitin-60S ribosomal L40 fusion"/>
    <property type="match status" value="1"/>
</dbReference>
<dbReference type="FunFam" id="4.10.1060.50:FF:000001">
    <property type="entry name" value="ubiquitin-60S ribosomal protein L40"/>
    <property type="match status" value="1"/>
</dbReference>
<dbReference type="Gene3D" id="4.10.1060.50">
    <property type="match status" value="1"/>
</dbReference>
<dbReference type="Gene3D" id="3.10.20.90">
    <property type="entry name" value="Phosphatidylinositol 3-kinase Catalytic Subunit, Chain A, domain 1"/>
    <property type="match status" value="1"/>
</dbReference>
<dbReference type="InterPro" id="IPR001975">
    <property type="entry name" value="Ribosomal_eL40_dom"/>
</dbReference>
<dbReference type="InterPro" id="IPR038587">
    <property type="entry name" value="Ribosomal_eL40_sf"/>
</dbReference>
<dbReference type="InterPro" id="IPR000626">
    <property type="entry name" value="Ubiquitin-like_dom"/>
</dbReference>
<dbReference type="InterPro" id="IPR029071">
    <property type="entry name" value="Ubiquitin-like_domsf"/>
</dbReference>
<dbReference type="InterPro" id="IPR019954">
    <property type="entry name" value="Ubiquitin_CS"/>
</dbReference>
<dbReference type="InterPro" id="IPR019956">
    <property type="entry name" value="Ubiquitin_dom"/>
</dbReference>
<dbReference type="InterPro" id="IPR050158">
    <property type="entry name" value="Ubiquitin_ubiquitin-like"/>
</dbReference>
<dbReference type="PANTHER" id="PTHR10666">
    <property type="entry name" value="UBIQUITIN"/>
    <property type="match status" value="1"/>
</dbReference>
<dbReference type="Pfam" id="PF01020">
    <property type="entry name" value="Ribosomal_L40e"/>
    <property type="match status" value="1"/>
</dbReference>
<dbReference type="Pfam" id="PF00240">
    <property type="entry name" value="ubiquitin"/>
    <property type="match status" value="1"/>
</dbReference>
<dbReference type="PRINTS" id="PR00348">
    <property type="entry name" value="UBIQUITIN"/>
</dbReference>
<dbReference type="SMART" id="SM01377">
    <property type="entry name" value="Ribosomal_L40e"/>
    <property type="match status" value="1"/>
</dbReference>
<dbReference type="SMART" id="SM00213">
    <property type="entry name" value="UBQ"/>
    <property type="match status" value="1"/>
</dbReference>
<dbReference type="SUPFAM" id="SSF54236">
    <property type="entry name" value="Ubiquitin-like"/>
    <property type="match status" value="1"/>
</dbReference>
<dbReference type="PROSITE" id="PS00299">
    <property type="entry name" value="UBIQUITIN_1"/>
    <property type="match status" value="1"/>
</dbReference>
<dbReference type="PROSITE" id="PS50053">
    <property type="entry name" value="UBIQUITIN_2"/>
    <property type="match status" value="1"/>
</dbReference>